<comment type="catalytic activity">
    <reaction>
        <text>tRNA(Arg) + L-arginine + ATP = L-arginyl-tRNA(Arg) + AMP + diphosphate</text>
        <dbReference type="Rhea" id="RHEA:20301"/>
        <dbReference type="Rhea" id="RHEA-COMP:9658"/>
        <dbReference type="Rhea" id="RHEA-COMP:9673"/>
        <dbReference type="ChEBI" id="CHEBI:30616"/>
        <dbReference type="ChEBI" id="CHEBI:32682"/>
        <dbReference type="ChEBI" id="CHEBI:33019"/>
        <dbReference type="ChEBI" id="CHEBI:78442"/>
        <dbReference type="ChEBI" id="CHEBI:78513"/>
        <dbReference type="ChEBI" id="CHEBI:456215"/>
        <dbReference type="EC" id="6.1.1.19"/>
    </reaction>
</comment>
<comment type="subunit">
    <text evidence="1">Monomer.</text>
</comment>
<comment type="subcellular location">
    <subcellularLocation>
        <location evidence="1">Cytoplasm</location>
    </subcellularLocation>
</comment>
<comment type="similarity">
    <text evidence="2">Belongs to the class-I aminoacyl-tRNA synthetase family.</text>
</comment>
<comment type="sequence caution" evidence="2">
    <conflict type="erroneous initiation">
        <sequence resource="EMBL-CDS" id="AAA63099"/>
    </conflict>
</comment>
<proteinExistence type="inferred from homology"/>
<protein>
    <recommendedName>
        <fullName>Arginine--tRNA ligase</fullName>
        <ecNumber>6.1.1.19</ecNumber>
    </recommendedName>
    <alternativeName>
        <fullName>Arginyl-tRNA synthetase</fullName>
        <shortName>ArgRS</shortName>
    </alternativeName>
</protein>
<reference key="1">
    <citation type="submission" date="1994-09" db="EMBL/GenBank/DDBJ databases">
        <authorList>
            <person name="Smith D.R."/>
            <person name="Robison K."/>
        </authorList>
    </citation>
    <scope>NUCLEOTIDE SEQUENCE [GENOMIC DNA]</scope>
</reference>
<reference key="2">
    <citation type="journal article" date="2001" name="Nature">
        <title>Massive gene decay in the leprosy bacillus.</title>
        <authorList>
            <person name="Cole S.T."/>
            <person name="Eiglmeier K."/>
            <person name="Parkhill J."/>
            <person name="James K.D."/>
            <person name="Thomson N.R."/>
            <person name="Wheeler P.R."/>
            <person name="Honore N."/>
            <person name="Garnier T."/>
            <person name="Churcher C.M."/>
            <person name="Harris D.E."/>
            <person name="Mungall K.L."/>
            <person name="Basham D."/>
            <person name="Brown D."/>
            <person name="Chillingworth T."/>
            <person name="Connor R."/>
            <person name="Davies R.M."/>
            <person name="Devlin K."/>
            <person name="Duthoy S."/>
            <person name="Feltwell T."/>
            <person name="Fraser A."/>
            <person name="Hamlin N."/>
            <person name="Holroyd S."/>
            <person name="Hornsby T."/>
            <person name="Jagels K."/>
            <person name="Lacroix C."/>
            <person name="Maclean J."/>
            <person name="Moule S."/>
            <person name="Murphy L.D."/>
            <person name="Oliver K."/>
            <person name="Quail M.A."/>
            <person name="Rajandream M.A."/>
            <person name="Rutherford K.M."/>
            <person name="Rutter S."/>
            <person name="Seeger K."/>
            <person name="Simon S."/>
            <person name="Simmonds M."/>
            <person name="Skelton J."/>
            <person name="Squares R."/>
            <person name="Squares S."/>
            <person name="Stevens K."/>
            <person name="Taylor K."/>
            <person name="Whitehead S."/>
            <person name="Woodward J.R."/>
            <person name="Barrell B.G."/>
        </authorList>
    </citation>
    <scope>NUCLEOTIDE SEQUENCE [LARGE SCALE GENOMIC DNA]</scope>
    <source>
        <strain>TN</strain>
    </source>
</reference>
<sequence length="550" mass="59603">MTPADLAELLKTTAIVVLAERGLDAAALPQTVTVERPRNPEHGDYSSNLAMQLGKKVGANPLELAGWLAEVLAQAGGIADVEVAGPGFINMRLDASAQAMIVNTVINADKNFGHSDDLAGYQINLEFVSANPTGPIHIGGTRWAAVGDALGRLLSTQGAAVVREYYFNDHGAQIDRFTNSLIAAAKGELTPADGYAGTYVTDIAAQVMQQAPYALSLPESEMHETVREIGVDLMFTHIKKSLHEFGTDFDVYTHEDSMHASGRVDEAIARLRDTGNVYEKDGALWLRTSAFGDDKDRVVIKSDGKPAYIAGDLAYYLDKRQRGFDLCIYMLGADHHGYIARLKAAAAAFGDDPAIVEVLIGQMVNLVCDGQLVRMSKRSGNVITLDDLVEAIGVDAARYSLIRSSVDTPIDIDLALWSSSSNENPVYYVQYAHARLSALARNAAEFGLIPDTGHLELLSHDKEGALLRTVGEFPQVLKTAAALREPHRVCRYLEDLAGDYHRFYDSCRVLPQGDEKPTDLHTARLALCQANRQVIANGLAILGVSAPERM</sequence>
<keyword id="KW-0030">Aminoacyl-tRNA synthetase</keyword>
<keyword id="KW-0067">ATP-binding</keyword>
<keyword id="KW-0963">Cytoplasm</keyword>
<keyword id="KW-0436">Ligase</keyword>
<keyword id="KW-0547">Nucleotide-binding</keyword>
<keyword id="KW-0648">Protein biosynthesis</keyword>
<keyword id="KW-1185">Reference proteome</keyword>
<feature type="chain" id="PRO_0000151577" description="Arginine--tRNA ligase">
    <location>
        <begin position="1"/>
        <end position="550"/>
    </location>
</feature>
<feature type="short sequence motif" description="'HIGH' region">
    <location>
        <begin position="130"/>
        <end position="140"/>
    </location>
</feature>
<feature type="sequence conflict" description="In Ref. 1; AAA63099." evidence="2" ref="1">
    <original>I</original>
    <variation>V</variation>
    <location>
        <position position="174"/>
    </location>
</feature>
<evidence type="ECO:0000250" key="1"/>
<evidence type="ECO:0000305" key="2"/>
<name>SYR_MYCLE</name>
<organism>
    <name type="scientific">Mycobacterium leprae (strain TN)</name>
    <dbReference type="NCBI Taxonomy" id="272631"/>
    <lineage>
        <taxon>Bacteria</taxon>
        <taxon>Bacillati</taxon>
        <taxon>Actinomycetota</taxon>
        <taxon>Actinomycetes</taxon>
        <taxon>Mycobacteriales</taxon>
        <taxon>Mycobacteriaceae</taxon>
        <taxon>Mycobacterium</taxon>
    </lineage>
</organism>
<accession>P45840</accession>
<gene>
    <name type="primary">argS</name>
    <name type="ordered locus">ML1127</name>
</gene>
<dbReference type="EC" id="6.1.1.19"/>
<dbReference type="EMBL" id="U15186">
    <property type="protein sequence ID" value="AAA63099.1"/>
    <property type="status" value="ALT_INIT"/>
    <property type="molecule type" value="Genomic_DNA"/>
</dbReference>
<dbReference type="EMBL" id="AL583920">
    <property type="protein sequence ID" value="CAC31508.1"/>
    <property type="molecule type" value="Genomic_DNA"/>
</dbReference>
<dbReference type="PIR" id="A87050">
    <property type="entry name" value="A87050"/>
</dbReference>
<dbReference type="RefSeq" id="NP_301821.1">
    <property type="nucleotide sequence ID" value="NC_002677.1"/>
</dbReference>
<dbReference type="RefSeq" id="WP_010908145.1">
    <property type="nucleotide sequence ID" value="NC_002677.1"/>
</dbReference>
<dbReference type="SMR" id="P45840"/>
<dbReference type="STRING" id="272631.gene:17574954"/>
<dbReference type="KEGG" id="mle:ML1127"/>
<dbReference type="PATRIC" id="fig|272631.5.peg.2049"/>
<dbReference type="Leproma" id="ML1127"/>
<dbReference type="eggNOG" id="COG0018">
    <property type="taxonomic scope" value="Bacteria"/>
</dbReference>
<dbReference type="HOGENOM" id="CLU_006406_0_1_11"/>
<dbReference type="OrthoDB" id="9803211at2"/>
<dbReference type="Proteomes" id="UP000000806">
    <property type="component" value="Chromosome"/>
</dbReference>
<dbReference type="GO" id="GO:0005737">
    <property type="term" value="C:cytoplasm"/>
    <property type="evidence" value="ECO:0007669"/>
    <property type="project" value="UniProtKB-SubCell"/>
</dbReference>
<dbReference type="GO" id="GO:0004814">
    <property type="term" value="F:arginine-tRNA ligase activity"/>
    <property type="evidence" value="ECO:0007669"/>
    <property type="project" value="UniProtKB-UniRule"/>
</dbReference>
<dbReference type="GO" id="GO:0005524">
    <property type="term" value="F:ATP binding"/>
    <property type="evidence" value="ECO:0007669"/>
    <property type="project" value="UniProtKB-UniRule"/>
</dbReference>
<dbReference type="GO" id="GO:0006420">
    <property type="term" value="P:arginyl-tRNA aminoacylation"/>
    <property type="evidence" value="ECO:0007669"/>
    <property type="project" value="UniProtKB-UniRule"/>
</dbReference>
<dbReference type="CDD" id="cd07956">
    <property type="entry name" value="Anticodon_Ia_Arg"/>
    <property type="match status" value="1"/>
</dbReference>
<dbReference type="CDD" id="cd00671">
    <property type="entry name" value="ArgRS_core"/>
    <property type="match status" value="1"/>
</dbReference>
<dbReference type="FunFam" id="1.10.730.10:FF:000008">
    <property type="entry name" value="Arginine--tRNA ligase"/>
    <property type="match status" value="1"/>
</dbReference>
<dbReference type="FunFam" id="3.30.1360.70:FF:000003">
    <property type="entry name" value="Arginine--tRNA ligase"/>
    <property type="match status" value="1"/>
</dbReference>
<dbReference type="FunFam" id="3.40.50.620:FF:000062">
    <property type="entry name" value="Arginine--tRNA ligase"/>
    <property type="match status" value="1"/>
</dbReference>
<dbReference type="Gene3D" id="3.30.1360.70">
    <property type="entry name" value="Arginyl tRNA synthetase N-terminal domain"/>
    <property type="match status" value="1"/>
</dbReference>
<dbReference type="Gene3D" id="3.40.50.620">
    <property type="entry name" value="HUPs"/>
    <property type="match status" value="1"/>
</dbReference>
<dbReference type="Gene3D" id="1.10.730.10">
    <property type="entry name" value="Isoleucyl-tRNA Synthetase, Domain 1"/>
    <property type="match status" value="1"/>
</dbReference>
<dbReference type="HAMAP" id="MF_00123">
    <property type="entry name" value="Arg_tRNA_synth"/>
    <property type="match status" value="1"/>
</dbReference>
<dbReference type="InterPro" id="IPR001412">
    <property type="entry name" value="aa-tRNA-synth_I_CS"/>
</dbReference>
<dbReference type="InterPro" id="IPR001278">
    <property type="entry name" value="Arg-tRNA-ligase"/>
</dbReference>
<dbReference type="InterPro" id="IPR005148">
    <property type="entry name" value="Arg-tRNA-synth_N"/>
</dbReference>
<dbReference type="InterPro" id="IPR036695">
    <property type="entry name" value="Arg-tRNA-synth_N_sf"/>
</dbReference>
<dbReference type="InterPro" id="IPR035684">
    <property type="entry name" value="ArgRS_core"/>
</dbReference>
<dbReference type="InterPro" id="IPR008909">
    <property type="entry name" value="DALR_anticod-bd"/>
</dbReference>
<dbReference type="InterPro" id="IPR014729">
    <property type="entry name" value="Rossmann-like_a/b/a_fold"/>
</dbReference>
<dbReference type="InterPro" id="IPR009080">
    <property type="entry name" value="tRNAsynth_Ia_anticodon-bd"/>
</dbReference>
<dbReference type="NCBIfam" id="TIGR00456">
    <property type="entry name" value="argS"/>
    <property type="match status" value="1"/>
</dbReference>
<dbReference type="PANTHER" id="PTHR11956:SF5">
    <property type="entry name" value="ARGININE--TRNA LIGASE, CYTOPLASMIC"/>
    <property type="match status" value="1"/>
</dbReference>
<dbReference type="PANTHER" id="PTHR11956">
    <property type="entry name" value="ARGINYL-TRNA SYNTHETASE"/>
    <property type="match status" value="1"/>
</dbReference>
<dbReference type="Pfam" id="PF03485">
    <property type="entry name" value="Arg_tRNA_synt_N"/>
    <property type="match status" value="1"/>
</dbReference>
<dbReference type="Pfam" id="PF05746">
    <property type="entry name" value="DALR_1"/>
    <property type="match status" value="1"/>
</dbReference>
<dbReference type="Pfam" id="PF00750">
    <property type="entry name" value="tRNA-synt_1d"/>
    <property type="match status" value="1"/>
</dbReference>
<dbReference type="PRINTS" id="PR01038">
    <property type="entry name" value="TRNASYNTHARG"/>
</dbReference>
<dbReference type="SMART" id="SM01016">
    <property type="entry name" value="Arg_tRNA_synt_N"/>
    <property type="match status" value="1"/>
</dbReference>
<dbReference type="SMART" id="SM00836">
    <property type="entry name" value="DALR_1"/>
    <property type="match status" value="1"/>
</dbReference>
<dbReference type="SUPFAM" id="SSF47323">
    <property type="entry name" value="Anticodon-binding domain of a subclass of class I aminoacyl-tRNA synthetases"/>
    <property type="match status" value="1"/>
</dbReference>
<dbReference type="SUPFAM" id="SSF55190">
    <property type="entry name" value="Arginyl-tRNA synthetase (ArgRS), N-terminal 'additional' domain"/>
    <property type="match status" value="1"/>
</dbReference>
<dbReference type="SUPFAM" id="SSF52374">
    <property type="entry name" value="Nucleotidylyl transferase"/>
    <property type="match status" value="1"/>
</dbReference>
<dbReference type="PROSITE" id="PS00178">
    <property type="entry name" value="AA_TRNA_LIGASE_I"/>
    <property type="match status" value="1"/>
</dbReference>